<keyword id="KW-0963">Cytoplasm</keyword>
<keyword id="KW-0369">Histidine metabolism</keyword>
<keyword id="KW-0378">Hydrolase</keyword>
<keyword id="KW-0408">Iron</keyword>
<keyword id="KW-0479">Metal-binding</keyword>
<keyword id="KW-1185">Reference proteome</keyword>
<keyword id="KW-0862">Zinc</keyword>
<proteinExistence type="inferred from homology"/>
<comment type="function">
    <text evidence="1">Catalyzes the hydrolytic cleavage of the carbon-nitrogen bond in imidazolone-5-propanoate to yield N-formimidoyl-L-glutamate. It is the third step in the universal histidine degradation pathway.</text>
</comment>
<comment type="catalytic activity">
    <reaction evidence="1">
        <text>4-imidazolone-5-propanoate + H2O = N-formimidoyl-L-glutamate</text>
        <dbReference type="Rhea" id="RHEA:23660"/>
        <dbReference type="ChEBI" id="CHEBI:15377"/>
        <dbReference type="ChEBI" id="CHEBI:58928"/>
        <dbReference type="ChEBI" id="CHEBI:77893"/>
        <dbReference type="EC" id="3.5.2.7"/>
    </reaction>
</comment>
<comment type="cofactor">
    <cofactor evidence="1">
        <name>Zn(2+)</name>
        <dbReference type="ChEBI" id="CHEBI:29105"/>
    </cofactor>
    <cofactor evidence="1">
        <name>Fe(3+)</name>
        <dbReference type="ChEBI" id="CHEBI:29034"/>
    </cofactor>
    <text evidence="1">Binds 1 zinc or iron ion per subunit.</text>
</comment>
<comment type="pathway">
    <text evidence="1">Amino-acid degradation; L-histidine degradation into L-glutamate; N-formimidoyl-L-glutamate from L-histidine: step 3/3.</text>
</comment>
<comment type="subcellular location">
    <subcellularLocation>
        <location evidence="1">Cytoplasm</location>
    </subcellularLocation>
</comment>
<comment type="similarity">
    <text evidence="1">Belongs to the metallo-dependent hydrolases superfamily. HutI family.</text>
</comment>
<comment type="sequence caution" evidence="2">
    <conflict type="erroneous initiation">
        <sequence resource="EMBL-CDS" id="AAV95457"/>
    </conflict>
</comment>
<protein>
    <recommendedName>
        <fullName evidence="1">Imidazolonepropionase</fullName>
        <ecNumber evidence="1">3.5.2.7</ecNumber>
    </recommendedName>
    <alternativeName>
        <fullName evidence="1">Imidazolone-5-propionate hydrolase</fullName>
    </alternativeName>
</protein>
<sequence length="401" mass="42289">MTLALFHNLTLASMTDGPTPYGLMPKGALVAEAGQVLWSGPQAELPAAFAAVPAHDLGRRLVTPALIDCHTHVVHGGNRANEFEMRLNGASYEEVARAGGGIVSTVSATRTATEAELLASALPRVDAMIAEGVAVIEVKSGYGLDIETELRMLRAARAIGQHRDVTIRTSFLGAHAVPADFAGRADAYIDTVAIPALRTAHAEGLVDAVDGFCEGIAFQPEQIARVFDVARDLGLPMKLHAEQLSNLGGTKLAASYGALSADHIEYLDEDGVAAMARAGMTAVILPGAFYTLRETQKPPVALLRKHRVPMAVSTDANPGSSPMTSLLLAMNMACTLFRLTPEEALAGTTRNAARALGMADRGTLAPGQRADLAVWDVAHPAELAYRIGFNPLYKRIIGGTL</sequence>
<dbReference type="EC" id="3.5.2.7" evidence="1"/>
<dbReference type="EMBL" id="CP000031">
    <property type="protein sequence ID" value="AAV95457.1"/>
    <property type="status" value="ALT_INIT"/>
    <property type="molecule type" value="Genomic_DNA"/>
</dbReference>
<dbReference type="RefSeq" id="WP_044028313.1">
    <property type="nucleotide sequence ID" value="NC_003911.12"/>
</dbReference>
<dbReference type="SMR" id="Q5LRD9"/>
<dbReference type="STRING" id="246200.SPO2191"/>
<dbReference type="PaxDb" id="246200-SPO2191"/>
<dbReference type="KEGG" id="sil:SPO2191"/>
<dbReference type="eggNOG" id="COG1228">
    <property type="taxonomic scope" value="Bacteria"/>
</dbReference>
<dbReference type="HOGENOM" id="CLU_041647_0_0_5"/>
<dbReference type="OrthoDB" id="9776455at2"/>
<dbReference type="UniPathway" id="UPA00379">
    <property type="reaction ID" value="UER00551"/>
</dbReference>
<dbReference type="Proteomes" id="UP000001023">
    <property type="component" value="Chromosome"/>
</dbReference>
<dbReference type="GO" id="GO:0005737">
    <property type="term" value="C:cytoplasm"/>
    <property type="evidence" value="ECO:0007669"/>
    <property type="project" value="UniProtKB-SubCell"/>
</dbReference>
<dbReference type="GO" id="GO:0050480">
    <property type="term" value="F:imidazolonepropionase activity"/>
    <property type="evidence" value="ECO:0007669"/>
    <property type="project" value="UniProtKB-UniRule"/>
</dbReference>
<dbReference type="GO" id="GO:0005506">
    <property type="term" value="F:iron ion binding"/>
    <property type="evidence" value="ECO:0007669"/>
    <property type="project" value="UniProtKB-UniRule"/>
</dbReference>
<dbReference type="GO" id="GO:0008270">
    <property type="term" value="F:zinc ion binding"/>
    <property type="evidence" value="ECO:0007669"/>
    <property type="project" value="UniProtKB-UniRule"/>
</dbReference>
<dbReference type="GO" id="GO:0019556">
    <property type="term" value="P:L-histidine catabolic process to glutamate and formamide"/>
    <property type="evidence" value="ECO:0007669"/>
    <property type="project" value="UniProtKB-UniPathway"/>
</dbReference>
<dbReference type="GO" id="GO:0019557">
    <property type="term" value="P:L-histidine catabolic process to glutamate and formate"/>
    <property type="evidence" value="ECO:0007669"/>
    <property type="project" value="UniProtKB-UniPathway"/>
</dbReference>
<dbReference type="FunFam" id="3.20.20.140:FF:000007">
    <property type="entry name" value="Imidazolonepropionase"/>
    <property type="match status" value="1"/>
</dbReference>
<dbReference type="Gene3D" id="3.20.20.140">
    <property type="entry name" value="Metal-dependent hydrolases"/>
    <property type="match status" value="1"/>
</dbReference>
<dbReference type="Gene3D" id="2.30.40.10">
    <property type="entry name" value="Urease, subunit C, domain 1"/>
    <property type="match status" value="1"/>
</dbReference>
<dbReference type="HAMAP" id="MF_00372">
    <property type="entry name" value="HutI"/>
    <property type="match status" value="1"/>
</dbReference>
<dbReference type="InterPro" id="IPR006680">
    <property type="entry name" value="Amidohydro-rel"/>
</dbReference>
<dbReference type="InterPro" id="IPR005920">
    <property type="entry name" value="HutI"/>
</dbReference>
<dbReference type="InterPro" id="IPR011059">
    <property type="entry name" value="Metal-dep_hydrolase_composite"/>
</dbReference>
<dbReference type="InterPro" id="IPR032466">
    <property type="entry name" value="Metal_Hydrolase"/>
</dbReference>
<dbReference type="NCBIfam" id="TIGR01224">
    <property type="entry name" value="hutI"/>
    <property type="match status" value="1"/>
</dbReference>
<dbReference type="PANTHER" id="PTHR42752">
    <property type="entry name" value="IMIDAZOLONEPROPIONASE"/>
    <property type="match status" value="1"/>
</dbReference>
<dbReference type="PANTHER" id="PTHR42752:SF1">
    <property type="entry name" value="IMIDAZOLONEPROPIONASE-RELATED"/>
    <property type="match status" value="1"/>
</dbReference>
<dbReference type="Pfam" id="PF01979">
    <property type="entry name" value="Amidohydro_1"/>
    <property type="match status" value="1"/>
</dbReference>
<dbReference type="SUPFAM" id="SSF51338">
    <property type="entry name" value="Composite domain of metallo-dependent hydrolases"/>
    <property type="match status" value="1"/>
</dbReference>
<dbReference type="SUPFAM" id="SSF51556">
    <property type="entry name" value="Metallo-dependent hydrolases"/>
    <property type="match status" value="1"/>
</dbReference>
<feature type="chain" id="PRO_0000306515" description="Imidazolonepropionase">
    <location>
        <begin position="1"/>
        <end position="401"/>
    </location>
</feature>
<feature type="binding site" evidence="1">
    <location>
        <position position="70"/>
    </location>
    <ligand>
        <name>Fe(3+)</name>
        <dbReference type="ChEBI" id="CHEBI:29034"/>
    </ligand>
</feature>
<feature type="binding site" evidence="1">
    <location>
        <position position="70"/>
    </location>
    <ligand>
        <name>Zn(2+)</name>
        <dbReference type="ChEBI" id="CHEBI:29105"/>
    </ligand>
</feature>
<feature type="binding site" evidence="1">
    <location>
        <position position="72"/>
    </location>
    <ligand>
        <name>Fe(3+)</name>
        <dbReference type="ChEBI" id="CHEBI:29034"/>
    </ligand>
</feature>
<feature type="binding site" evidence="1">
    <location>
        <position position="72"/>
    </location>
    <ligand>
        <name>Zn(2+)</name>
        <dbReference type="ChEBI" id="CHEBI:29105"/>
    </ligand>
</feature>
<feature type="binding site" evidence="1">
    <location>
        <position position="79"/>
    </location>
    <ligand>
        <name>4-imidazolone-5-propanoate</name>
        <dbReference type="ChEBI" id="CHEBI:77893"/>
    </ligand>
</feature>
<feature type="binding site" evidence="1">
    <location>
        <position position="142"/>
    </location>
    <ligand>
        <name>4-imidazolone-5-propanoate</name>
        <dbReference type="ChEBI" id="CHEBI:77893"/>
    </ligand>
</feature>
<feature type="binding site" evidence="1">
    <location>
        <position position="142"/>
    </location>
    <ligand>
        <name>N-formimidoyl-L-glutamate</name>
        <dbReference type="ChEBI" id="CHEBI:58928"/>
    </ligand>
</feature>
<feature type="binding site" evidence="1">
    <location>
        <position position="175"/>
    </location>
    <ligand>
        <name>4-imidazolone-5-propanoate</name>
        <dbReference type="ChEBI" id="CHEBI:77893"/>
    </ligand>
</feature>
<feature type="binding site" evidence="1">
    <location>
        <position position="240"/>
    </location>
    <ligand>
        <name>Fe(3+)</name>
        <dbReference type="ChEBI" id="CHEBI:29034"/>
    </ligand>
</feature>
<feature type="binding site" evidence="1">
    <location>
        <position position="240"/>
    </location>
    <ligand>
        <name>Zn(2+)</name>
        <dbReference type="ChEBI" id="CHEBI:29105"/>
    </ligand>
</feature>
<feature type="binding site" evidence="1">
    <location>
        <position position="243"/>
    </location>
    <ligand>
        <name>4-imidazolone-5-propanoate</name>
        <dbReference type="ChEBI" id="CHEBI:77893"/>
    </ligand>
</feature>
<feature type="binding site" evidence="1">
    <location>
        <position position="315"/>
    </location>
    <ligand>
        <name>Fe(3+)</name>
        <dbReference type="ChEBI" id="CHEBI:29034"/>
    </ligand>
</feature>
<feature type="binding site" evidence="1">
    <location>
        <position position="315"/>
    </location>
    <ligand>
        <name>Zn(2+)</name>
        <dbReference type="ChEBI" id="CHEBI:29105"/>
    </ligand>
</feature>
<feature type="binding site" evidence="1">
    <location>
        <position position="317"/>
    </location>
    <ligand>
        <name>N-formimidoyl-L-glutamate</name>
        <dbReference type="ChEBI" id="CHEBI:58928"/>
    </ligand>
</feature>
<feature type="binding site" evidence="1">
    <location>
        <position position="319"/>
    </location>
    <ligand>
        <name>N-formimidoyl-L-glutamate</name>
        <dbReference type="ChEBI" id="CHEBI:58928"/>
    </ligand>
</feature>
<feature type="binding site" evidence="1">
    <location>
        <position position="320"/>
    </location>
    <ligand>
        <name>4-imidazolone-5-propanoate</name>
        <dbReference type="ChEBI" id="CHEBI:77893"/>
    </ligand>
</feature>
<organism>
    <name type="scientific">Ruegeria pomeroyi (strain ATCC 700808 / DSM 15171 / DSS-3)</name>
    <name type="common">Silicibacter pomeroyi</name>
    <dbReference type="NCBI Taxonomy" id="246200"/>
    <lineage>
        <taxon>Bacteria</taxon>
        <taxon>Pseudomonadati</taxon>
        <taxon>Pseudomonadota</taxon>
        <taxon>Alphaproteobacteria</taxon>
        <taxon>Rhodobacterales</taxon>
        <taxon>Roseobacteraceae</taxon>
        <taxon>Ruegeria</taxon>
    </lineage>
</organism>
<name>HUTI_RUEPO</name>
<evidence type="ECO:0000255" key="1">
    <source>
        <dbReference type="HAMAP-Rule" id="MF_00372"/>
    </source>
</evidence>
<evidence type="ECO:0000305" key="2"/>
<reference key="1">
    <citation type="journal article" date="2004" name="Nature">
        <title>Genome sequence of Silicibacter pomeroyi reveals adaptations to the marine environment.</title>
        <authorList>
            <person name="Moran M.A."/>
            <person name="Buchan A."/>
            <person name="Gonzalez J.M."/>
            <person name="Heidelberg J.F."/>
            <person name="Whitman W.B."/>
            <person name="Kiene R.P."/>
            <person name="Henriksen J.R."/>
            <person name="King G.M."/>
            <person name="Belas R."/>
            <person name="Fuqua C."/>
            <person name="Brinkac L.M."/>
            <person name="Lewis M."/>
            <person name="Johri S."/>
            <person name="Weaver B."/>
            <person name="Pai G."/>
            <person name="Eisen J.A."/>
            <person name="Rahe E."/>
            <person name="Sheldon W.M."/>
            <person name="Ye W."/>
            <person name="Miller T.R."/>
            <person name="Carlton J."/>
            <person name="Rasko D.A."/>
            <person name="Paulsen I.T."/>
            <person name="Ren Q."/>
            <person name="Daugherty S.C."/>
            <person name="DeBoy R.T."/>
            <person name="Dodson R.J."/>
            <person name="Durkin A.S."/>
            <person name="Madupu R."/>
            <person name="Nelson W.C."/>
            <person name="Sullivan S.A."/>
            <person name="Rosovitz M.J."/>
            <person name="Haft D.H."/>
            <person name="Selengut J."/>
            <person name="Ward N."/>
        </authorList>
    </citation>
    <scope>NUCLEOTIDE SEQUENCE [LARGE SCALE GENOMIC DNA]</scope>
    <source>
        <strain>ATCC 700808 / DSM 15171 / DSS-3</strain>
    </source>
</reference>
<reference key="2">
    <citation type="journal article" date="2014" name="Stand. Genomic Sci.">
        <title>An updated genome annotation for the model marine bacterium Ruegeria pomeroyi DSS-3.</title>
        <authorList>
            <person name="Rivers A.R."/>
            <person name="Smith C.B."/>
            <person name="Moran M.A."/>
        </authorList>
    </citation>
    <scope>GENOME REANNOTATION</scope>
    <source>
        <strain>ATCC 700808 / DSM 15171 / DSS-3</strain>
    </source>
</reference>
<accession>Q5LRD9</accession>
<gene>
    <name evidence="1" type="primary">hutI</name>
    <name type="ordered locus">SPO2191</name>
</gene>